<sequence length="643" mass="72729">MKDYDELLKYYELYETIGTGGFAKVKLACHVLTGEMVAIKIMDKNALGSDLPRVKTEIDALKSLRHQHICQLYHVLETKNKIFMVLEYCPGGELFDYIISQDRLSEEETRVVFRQILSAVAYVHSQGYAHRDLKPENLLFDENHKLKLIDFGLCAKPKGNKDYHLQTCCGSLAYAAPELIQGKSYLGSEADVWSMGILLYVLMCGFLPFDDDNVMALYKKIMRGKYEVPKWLSPSSILLLQQMLQVDPKKRISMRNLLNHPWVMQDYSCPVEWQSKTPLTHLDEDCVTELSVHHRSSRQTMEDLISSWQYDHLTATYLLLLAKKARGKPARLQLLSFSCGTASTTPKSKNLSLEDMSTSDDNCVAGLIDYELCEDKLLAPKTPQVTKHLAESNHAASKSPAPGVRRAVANKLMDKENVCTPKSSVKNEEQFVFSEPKIPVSKNQYKREIPASPTRFPTPAKARAQCLREAPVRTPGNSAGADTLTTGVISPERRCRSMDVDLNQAHMEDTPKKKGTNVFGSLERGLDKVLTALTRNKKKGSARDGPRKRKLHYNVTTTRLVNPDQLLSEIMAILPKKNVDFVQKGYTLKCQTQSDFGKVTMQFELEVCQLQRPDVVGIRRQRLKGDAWVYKRLVEDILSGCKM</sequence>
<protein>
    <recommendedName>
        <fullName>Maternal embryonic leucine zipper kinase</fullName>
        <ecNumber>2.7.11.1</ecNumber>
    </recommendedName>
    <alternativeName>
        <fullName>Protein kinase PK38</fullName>
        <shortName>mPK38</shortName>
    </alternativeName>
    <alternativeName>
        <fullName>Tyrosine-protein kinase MELK</fullName>
        <ecNumber>2.7.10.2</ecNumber>
    </alternativeName>
</protein>
<keyword id="KW-0002">3D-structure</keyword>
<keyword id="KW-0053">Apoptosis</keyword>
<keyword id="KW-0067">ATP-binding</keyword>
<keyword id="KW-0106">Calcium</keyword>
<keyword id="KW-0131">Cell cycle</keyword>
<keyword id="KW-1003">Cell membrane</keyword>
<keyword id="KW-0418">Kinase</keyword>
<keyword id="KW-0446">Lipid-binding</keyword>
<keyword id="KW-0472">Membrane</keyword>
<keyword id="KW-0547">Nucleotide-binding</keyword>
<keyword id="KW-0597">Phosphoprotein</keyword>
<keyword id="KW-1185">Reference proteome</keyword>
<keyword id="KW-0723">Serine/threonine-protein kinase</keyword>
<keyword id="KW-0808">Transferase</keyword>
<organism>
    <name type="scientific">Mus musculus</name>
    <name type="common">Mouse</name>
    <dbReference type="NCBI Taxonomy" id="10090"/>
    <lineage>
        <taxon>Eukaryota</taxon>
        <taxon>Metazoa</taxon>
        <taxon>Chordata</taxon>
        <taxon>Craniata</taxon>
        <taxon>Vertebrata</taxon>
        <taxon>Euteleostomi</taxon>
        <taxon>Mammalia</taxon>
        <taxon>Eutheria</taxon>
        <taxon>Euarchontoglires</taxon>
        <taxon>Glires</taxon>
        <taxon>Rodentia</taxon>
        <taxon>Myomorpha</taxon>
        <taxon>Muroidea</taxon>
        <taxon>Muridae</taxon>
        <taxon>Murinae</taxon>
        <taxon>Mus</taxon>
        <taxon>Mus</taxon>
    </lineage>
</organism>
<evidence type="ECO:0000250" key="1"/>
<evidence type="ECO:0000250" key="2">
    <source>
        <dbReference type="UniProtKB" id="Q14680"/>
    </source>
</evidence>
<evidence type="ECO:0000255" key="3">
    <source>
        <dbReference type="PROSITE-ProRule" id="PRU00159"/>
    </source>
</evidence>
<evidence type="ECO:0000255" key="4">
    <source>
        <dbReference type="PROSITE-ProRule" id="PRU00565"/>
    </source>
</evidence>
<evidence type="ECO:0000255" key="5">
    <source>
        <dbReference type="PROSITE-ProRule" id="PRU10027"/>
    </source>
</evidence>
<evidence type="ECO:0000269" key="6">
    <source>
    </source>
</evidence>
<evidence type="ECO:0000269" key="7">
    <source>
    </source>
</evidence>
<evidence type="ECO:0000269" key="8">
    <source>
    </source>
</evidence>
<evidence type="ECO:0000269" key="9">
    <source>
    </source>
</evidence>
<evidence type="ECO:0000305" key="10"/>
<evidence type="ECO:0007744" key="11">
    <source>
    </source>
</evidence>
<evidence type="ECO:0007744" key="12">
    <source>
    </source>
</evidence>
<evidence type="ECO:0007744" key="13">
    <source>
    </source>
</evidence>
<evidence type="ECO:0007829" key="14">
    <source>
        <dbReference type="PDB" id="4BFM"/>
    </source>
</evidence>
<comment type="function">
    <text evidence="6 7">Serine/threonine-protein kinase involved in various processes such as cell cycle regulation, self-renewal of stem cells, apoptosis and splicing regulation. Has a broad substrate specificity; phosphorylates BCL2L14, CDC25B, MAP3K5/ASK1 and ZNF622. Acts as an activator of apoptosis by phosphorylating and activating MAP3K5/ASK1. Acts as a regulator of cell cycle, notably by mediating phosphorylation of CDC25B, promoting localization of CDC25B to the centrosome and the spindle poles during mitosis. Plays a key role in cell proliferation. Required for proliferation of embryonic and postnatal multipotent neural progenitors. Phosphorylates and inhibits BCL2L14. Also involved in the inhibition of spliceosome assembly during mitosis by phosphorylating ZNF622, thereby contributing to its redirection to the nucleus. May also play a role in primitive hematopoiesis.</text>
</comment>
<comment type="catalytic activity">
    <reaction evidence="5">
        <text>L-tyrosyl-[protein] + ATP = O-phospho-L-tyrosyl-[protein] + ADP + H(+)</text>
        <dbReference type="Rhea" id="RHEA:10596"/>
        <dbReference type="Rhea" id="RHEA-COMP:10136"/>
        <dbReference type="Rhea" id="RHEA-COMP:20101"/>
        <dbReference type="ChEBI" id="CHEBI:15378"/>
        <dbReference type="ChEBI" id="CHEBI:30616"/>
        <dbReference type="ChEBI" id="CHEBI:46858"/>
        <dbReference type="ChEBI" id="CHEBI:61978"/>
        <dbReference type="ChEBI" id="CHEBI:456216"/>
        <dbReference type="EC" id="2.7.10.2"/>
    </reaction>
</comment>
<comment type="catalytic activity">
    <reaction>
        <text>L-seryl-[protein] + ATP = O-phospho-L-seryl-[protein] + ADP + H(+)</text>
        <dbReference type="Rhea" id="RHEA:17989"/>
        <dbReference type="Rhea" id="RHEA-COMP:9863"/>
        <dbReference type="Rhea" id="RHEA-COMP:11604"/>
        <dbReference type="ChEBI" id="CHEBI:15378"/>
        <dbReference type="ChEBI" id="CHEBI:29999"/>
        <dbReference type="ChEBI" id="CHEBI:30616"/>
        <dbReference type="ChEBI" id="CHEBI:83421"/>
        <dbReference type="ChEBI" id="CHEBI:456216"/>
        <dbReference type="EC" id="2.7.11.1"/>
    </reaction>
</comment>
<comment type="catalytic activity">
    <reaction>
        <text>L-threonyl-[protein] + ATP = O-phospho-L-threonyl-[protein] + ADP + H(+)</text>
        <dbReference type="Rhea" id="RHEA:46608"/>
        <dbReference type="Rhea" id="RHEA-COMP:11060"/>
        <dbReference type="Rhea" id="RHEA-COMP:11605"/>
        <dbReference type="ChEBI" id="CHEBI:15378"/>
        <dbReference type="ChEBI" id="CHEBI:30013"/>
        <dbReference type="ChEBI" id="CHEBI:30616"/>
        <dbReference type="ChEBI" id="CHEBI:61977"/>
        <dbReference type="ChEBI" id="CHEBI:456216"/>
        <dbReference type="EC" id="2.7.11.1"/>
    </reaction>
</comment>
<comment type="activity regulation">
    <text evidence="1">Activated by autophosphorylation of the T-loop at Thr-167 and Ser-171: in contrast to other members of the SNF1 subfamily, phosphorylation at Thr-167 is not mediated by STK11/LKB1 but via autophosphorylation instead. Inhibited by calcium-binding. Kinase activity is also regulated by reducing agents: dithiothreitol (DTT) or reduced glutathione are required for kinase activity in vitro; such dependence is however not due to the presence of disulfide bonds (By similarity).</text>
</comment>
<comment type="subunit">
    <text evidence="1">Monomer. Interacts with ZNF622 and PPP1R8 (By similarity).</text>
</comment>
<comment type="subcellular location">
    <subcellularLocation>
        <location evidence="1">Cell membrane</location>
        <topology evidence="1">Peripheral membrane protein</topology>
    </subcellularLocation>
</comment>
<comment type="tissue specificity">
    <text evidence="6 8 9">Expressed in testis, ovary, thymus, spleen and T-cell. Expressed by neural progenitors: highly enriched in cultures containing multipotent progenitors.</text>
</comment>
<comment type="developmental stage">
    <text evidence="8">Expressed in the 2-cell-stage embryo, followed by a strong expression at 8-cell-stage.</text>
</comment>
<comment type="domain">
    <text evidence="1">The KA1 domain mediates binding to phospholipids and targeting to membranes.</text>
</comment>
<comment type="PTM">
    <text evidence="1">Autophosphorylated: autophosphorylation of the T-loop at Thr-167 and Ser-171 is required for activation.</text>
</comment>
<comment type="similarity">
    <text evidence="10">Belongs to the protein kinase superfamily. CAMK Ser/Thr protein kinase family. SNF1 subfamily.</text>
</comment>
<gene>
    <name type="primary">Melk</name>
    <name type="synonym">Kiaa0175</name>
    <name type="synonym">Pk38</name>
</gene>
<dbReference type="EC" id="2.7.11.1"/>
<dbReference type="EC" id="2.7.10.2"/>
<dbReference type="EMBL" id="L76158">
    <property type="protein sequence ID" value="AAB72030.1"/>
    <property type="molecule type" value="mRNA"/>
</dbReference>
<dbReference type="EMBL" id="X95351">
    <property type="protein sequence ID" value="CAA64641.1"/>
    <property type="molecule type" value="mRNA"/>
</dbReference>
<dbReference type="EMBL" id="AK011932">
    <property type="protein sequence ID" value="BAB27923.1"/>
    <property type="molecule type" value="mRNA"/>
</dbReference>
<dbReference type="EMBL" id="AK145316">
    <property type="protein sequence ID" value="BAE26362.1"/>
    <property type="molecule type" value="mRNA"/>
</dbReference>
<dbReference type="EMBL" id="AK164138">
    <property type="protein sequence ID" value="BAE37644.1"/>
    <property type="molecule type" value="mRNA"/>
</dbReference>
<dbReference type="EMBL" id="AK129076">
    <property type="protein sequence ID" value="BAC97886.1"/>
    <property type="molecule type" value="mRNA"/>
</dbReference>
<dbReference type="EMBL" id="AL805952">
    <property type="status" value="NOT_ANNOTATED_CDS"/>
    <property type="molecule type" value="Genomic_DNA"/>
</dbReference>
<dbReference type="EMBL" id="AL807399">
    <property type="status" value="NOT_ANNOTATED_CDS"/>
    <property type="molecule type" value="Genomic_DNA"/>
</dbReference>
<dbReference type="CCDS" id="CCDS18124.1"/>
<dbReference type="RefSeq" id="NP_034920.2">
    <property type="nucleotide sequence ID" value="NM_010790.2"/>
</dbReference>
<dbReference type="PDB" id="4BFM">
    <property type="method" value="X-ray"/>
    <property type="resolution" value="2.35 A"/>
    <property type="chains" value="A=1-326"/>
</dbReference>
<dbReference type="PDB" id="4CQG">
    <property type="method" value="X-ray"/>
    <property type="resolution" value="2.57 A"/>
    <property type="chains" value="A=1-326"/>
</dbReference>
<dbReference type="PDBsum" id="4BFM"/>
<dbReference type="PDBsum" id="4CQG"/>
<dbReference type="SMR" id="Q61846"/>
<dbReference type="BioGRID" id="201390">
    <property type="interactions" value="13"/>
</dbReference>
<dbReference type="FunCoup" id="Q61846">
    <property type="interactions" value="936"/>
</dbReference>
<dbReference type="STRING" id="10090.ENSMUSP00000043806"/>
<dbReference type="GlyGen" id="Q61846">
    <property type="glycosylation" value="1 site, 1 O-linked glycan (1 site)"/>
</dbReference>
<dbReference type="iPTMnet" id="Q61846"/>
<dbReference type="PhosphoSitePlus" id="Q61846"/>
<dbReference type="jPOST" id="Q61846"/>
<dbReference type="PaxDb" id="10090-ENSMUSP00000043806"/>
<dbReference type="ProteomicsDB" id="295853"/>
<dbReference type="Pumba" id="Q61846"/>
<dbReference type="Antibodypedia" id="2095">
    <property type="antibodies" value="460 antibodies from 39 providers"/>
</dbReference>
<dbReference type="DNASU" id="17279"/>
<dbReference type="Ensembl" id="ENSMUST00000045607.12">
    <property type="protein sequence ID" value="ENSMUSP00000043806.6"/>
    <property type="gene ID" value="ENSMUSG00000035683.14"/>
</dbReference>
<dbReference type="GeneID" id="17279"/>
<dbReference type="KEGG" id="mmu:17279"/>
<dbReference type="UCSC" id="uc008srv.1">
    <property type="organism name" value="mouse"/>
</dbReference>
<dbReference type="AGR" id="MGI:106924"/>
<dbReference type="CTD" id="9833"/>
<dbReference type="MGI" id="MGI:106924">
    <property type="gene designation" value="Melk"/>
</dbReference>
<dbReference type="VEuPathDB" id="HostDB:ENSMUSG00000035683"/>
<dbReference type="eggNOG" id="KOG0583">
    <property type="taxonomic scope" value="Eukaryota"/>
</dbReference>
<dbReference type="GeneTree" id="ENSGT00940000154889"/>
<dbReference type="HOGENOM" id="CLU_000288_157_8_1"/>
<dbReference type="InParanoid" id="Q61846"/>
<dbReference type="OMA" id="NVCTPKS"/>
<dbReference type="OrthoDB" id="193931at2759"/>
<dbReference type="PhylomeDB" id="Q61846"/>
<dbReference type="TreeFam" id="TF314032"/>
<dbReference type="BRENDA" id="2.7.11.1">
    <property type="organism ID" value="3474"/>
</dbReference>
<dbReference type="BioGRID-ORCS" id="17279">
    <property type="hits" value="3 hits in 82 CRISPR screens"/>
</dbReference>
<dbReference type="ChiTaRS" id="Melk">
    <property type="organism name" value="mouse"/>
</dbReference>
<dbReference type="EvolutionaryTrace" id="Q61846"/>
<dbReference type="PRO" id="PR:Q61846"/>
<dbReference type="Proteomes" id="UP000000589">
    <property type="component" value="Chromosome 4"/>
</dbReference>
<dbReference type="RNAct" id="Q61846">
    <property type="molecule type" value="protein"/>
</dbReference>
<dbReference type="Bgee" id="ENSMUSG00000035683">
    <property type="expression patterns" value="Expressed in primitive streak and 221 other cell types or tissues"/>
</dbReference>
<dbReference type="ExpressionAtlas" id="Q61846">
    <property type="expression patterns" value="baseline and differential"/>
</dbReference>
<dbReference type="GO" id="GO:0005938">
    <property type="term" value="C:cell cortex"/>
    <property type="evidence" value="ECO:0000250"/>
    <property type="project" value="UniProtKB"/>
</dbReference>
<dbReference type="GO" id="GO:0005737">
    <property type="term" value="C:cytoplasm"/>
    <property type="evidence" value="ECO:0000314"/>
    <property type="project" value="MGI"/>
</dbReference>
<dbReference type="GO" id="GO:0005886">
    <property type="term" value="C:plasma membrane"/>
    <property type="evidence" value="ECO:0000250"/>
    <property type="project" value="UniProtKB"/>
</dbReference>
<dbReference type="GO" id="GO:0005524">
    <property type="term" value="F:ATP binding"/>
    <property type="evidence" value="ECO:0007669"/>
    <property type="project" value="UniProtKB-KW"/>
</dbReference>
<dbReference type="GO" id="GO:0005509">
    <property type="term" value="F:calcium ion binding"/>
    <property type="evidence" value="ECO:0000250"/>
    <property type="project" value="UniProtKB"/>
</dbReference>
<dbReference type="GO" id="GO:0008289">
    <property type="term" value="F:lipid binding"/>
    <property type="evidence" value="ECO:0007669"/>
    <property type="project" value="UniProtKB-KW"/>
</dbReference>
<dbReference type="GO" id="GO:0004715">
    <property type="term" value="F:non-membrane spanning protein tyrosine kinase activity"/>
    <property type="evidence" value="ECO:0000250"/>
    <property type="project" value="UniProtKB"/>
</dbReference>
<dbReference type="GO" id="GO:0004672">
    <property type="term" value="F:protein kinase activity"/>
    <property type="evidence" value="ECO:0000314"/>
    <property type="project" value="MGI"/>
</dbReference>
<dbReference type="GO" id="GO:0106310">
    <property type="term" value="F:protein serine kinase activity"/>
    <property type="evidence" value="ECO:0007669"/>
    <property type="project" value="RHEA"/>
</dbReference>
<dbReference type="GO" id="GO:0004674">
    <property type="term" value="F:protein serine/threonine kinase activity"/>
    <property type="evidence" value="ECO:0000314"/>
    <property type="project" value="UniProtKB"/>
</dbReference>
<dbReference type="GO" id="GO:0006915">
    <property type="term" value="P:apoptotic process"/>
    <property type="evidence" value="ECO:0000250"/>
    <property type="project" value="UniProtKB"/>
</dbReference>
<dbReference type="GO" id="GO:0008283">
    <property type="term" value="P:cell population proliferation"/>
    <property type="evidence" value="ECO:0000250"/>
    <property type="project" value="UniProtKB"/>
</dbReference>
<dbReference type="GO" id="GO:0030097">
    <property type="term" value="P:hemopoiesis"/>
    <property type="evidence" value="ECO:0000250"/>
    <property type="project" value="UniProtKB"/>
</dbReference>
<dbReference type="GO" id="GO:0008631">
    <property type="term" value="P:intrinsic apoptotic signaling pathway in response to oxidative stress"/>
    <property type="evidence" value="ECO:0000314"/>
    <property type="project" value="MGI"/>
</dbReference>
<dbReference type="GO" id="GO:0061351">
    <property type="term" value="P:neural precursor cell proliferation"/>
    <property type="evidence" value="ECO:0000314"/>
    <property type="project" value="UniProtKB"/>
</dbReference>
<dbReference type="GO" id="GO:0043065">
    <property type="term" value="P:positive regulation of apoptotic process"/>
    <property type="evidence" value="ECO:0000314"/>
    <property type="project" value="UniProtKB"/>
</dbReference>
<dbReference type="GO" id="GO:0046777">
    <property type="term" value="P:protein autophosphorylation"/>
    <property type="evidence" value="ECO:0000250"/>
    <property type="project" value="UniProtKB"/>
</dbReference>
<dbReference type="CDD" id="cd12198">
    <property type="entry name" value="MELK_C"/>
    <property type="match status" value="1"/>
</dbReference>
<dbReference type="CDD" id="cd14078">
    <property type="entry name" value="STKc_MELK"/>
    <property type="match status" value="1"/>
</dbReference>
<dbReference type="CDD" id="cd14341">
    <property type="entry name" value="UBA_MELK"/>
    <property type="match status" value="1"/>
</dbReference>
<dbReference type="FunFam" id="1.10.510.10:FF:000571">
    <property type="entry name" value="Maternal embryonic leucine zipper kinase"/>
    <property type="match status" value="1"/>
</dbReference>
<dbReference type="FunFam" id="3.30.200.20:FF:000003">
    <property type="entry name" value="Non-specific serine/threonine protein kinase"/>
    <property type="match status" value="1"/>
</dbReference>
<dbReference type="FunFam" id="3.30.310.80:FF:000004">
    <property type="entry name" value="Non-specific serine/threonine protein kinase"/>
    <property type="match status" value="1"/>
</dbReference>
<dbReference type="Gene3D" id="3.30.310.80">
    <property type="entry name" value="Kinase associated domain 1, KA1"/>
    <property type="match status" value="1"/>
</dbReference>
<dbReference type="Gene3D" id="1.10.510.10">
    <property type="entry name" value="Transferase(Phosphotransferase) domain 1"/>
    <property type="match status" value="1"/>
</dbReference>
<dbReference type="InterPro" id="IPR028375">
    <property type="entry name" value="KA1/Ssp2_C"/>
</dbReference>
<dbReference type="InterPro" id="IPR001772">
    <property type="entry name" value="KA1_dom"/>
</dbReference>
<dbReference type="InterPro" id="IPR011009">
    <property type="entry name" value="Kinase-like_dom_sf"/>
</dbReference>
<dbReference type="InterPro" id="IPR034673">
    <property type="entry name" value="MELK"/>
</dbReference>
<dbReference type="InterPro" id="IPR048637">
    <property type="entry name" value="MELK_UBA"/>
</dbReference>
<dbReference type="InterPro" id="IPR000719">
    <property type="entry name" value="Prot_kinase_dom"/>
</dbReference>
<dbReference type="InterPro" id="IPR017441">
    <property type="entry name" value="Protein_kinase_ATP_BS"/>
</dbReference>
<dbReference type="InterPro" id="IPR008271">
    <property type="entry name" value="Ser/Thr_kinase_AS"/>
</dbReference>
<dbReference type="PANTHER" id="PTHR24346">
    <property type="entry name" value="MAP/MICROTUBULE AFFINITY-REGULATING KINASE"/>
    <property type="match status" value="1"/>
</dbReference>
<dbReference type="PANTHER" id="PTHR24346:SF30">
    <property type="entry name" value="MATERNAL EMBRYONIC LEUCINE ZIPPER KINASE"/>
    <property type="match status" value="1"/>
</dbReference>
<dbReference type="Pfam" id="PF02149">
    <property type="entry name" value="KA1"/>
    <property type="match status" value="1"/>
</dbReference>
<dbReference type="Pfam" id="PF00069">
    <property type="entry name" value="Pkinase"/>
    <property type="match status" value="1"/>
</dbReference>
<dbReference type="Pfam" id="PF21594">
    <property type="entry name" value="UBA_MELK"/>
    <property type="match status" value="1"/>
</dbReference>
<dbReference type="SMART" id="SM00220">
    <property type="entry name" value="S_TKc"/>
    <property type="match status" value="1"/>
</dbReference>
<dbReference type="SUPFAM" id="SSF103243">
    <property type="entry name" value="KA1-like"/>
    <property type="match status" value="1"/>
</dbReference>
<dbReference type="SUPFAM" id="SSF56112">
    <property type="entry name" value="Protein kinase-like (PK-like)"/>
    <property type="match status" value="1"/>
</dbReference>
<dbReference type="PROSITE" id="PS50032">
    <property type="entry name" value="KA1"/>
    <property type="match status" value="1"/>
</dbReference>
<dbReference type="PROSITE" id="PS00107">
    <property type="entry name" value="PROTEIN_KINASE_ATP"/>
    <property type="match status" value="1"/>
</dbReference>
<dbReference type="PROSITE" id="PS50011">
    <property type="entry name" value="PROTEIN_KINASE_DOM"/>
    <property type="match status" value="1"/>
</dbReference>
<dbReference type="PROSITE" id="PS00108">
    <property type="entry name" value="PROTEIN_KINASE_ST"/>
    <property type="match status" value="1"/>
</dbReference>
<accession>Q61846</accession>
<accession>Q3TPU1</accession>
<accession>Q61804</accession>
<accession>Q6ZQH6</accession>
<feature type="chain" id="PRO_0000086324" description="Maternal embryonic leucine zipper kinase">
    <location>
        <begin position="1"/>
        <end position="643"/>
    </location>
</feature>
<feature type="domain" description="Protein kinase" evidence="3">
    <location>
        <begin position="11"/>
        <end position="263"/>
    </location>
</feature>
<feature type="domain" description="KA1" evidence="4">
    <location>
        <begin position="594"/>
        <end position="643"/>
    </location>
</feature>
<feature type="region of interest" description="UBA-like" evidence="1">
    <location>
        <begin position="282"/>
        <end position="321"/>
    </location>
</feature>
<feature type="region of interest" description="Autoinhibitory region" evidence="1">
    <location>
        <begin position="326"/>
        <end position="643"/>
    </location>
</feature>
<feature type="active site" description="Proton acceptor" evidence="3 5">
    <location>
        <position position="132"/>
    </location>
</feature>
<feature type="binding site" evidence="3">
    <location>
        <begin position="17"/>
        <end position="25"/>
    </location>
    <ligand>
        <name>ATP</name>
        <dbReference type="ChEBI" id="CHEBI:30616"/>
    </ligand>
</feature>
<feature type="binding site" evidence="3">
    <location>
        <position position="40"/>
    </location>
    <ligand>
        <name>ATP</name>
        <dbReference type="ChEBI" id="CHEBI:30616"/>
    </ligand>
</feature>
<feature type="modified residue" description="Phosphothreonine; by autocatalysis" evidence="2">
    <location>
        <position position="56"/>
    </location>
</feature>
<feature type="modified residue" description="Phosphotyrosine; by autocatalysis" evidence="2">
    <location>
        <position position="163"/>
    </location>
</feature>
<feature type="modified residue" description="Phosphothreonine; by autocatalysis" evidence="2">
    <location>
        <position position="167"/>
    </location>
</feature>
<feature type="modified residue" description="Phosphoserine; by autocatalysis" evidence="2">
    <location>
        <position position="171"/>
    </location>
</feature>
<feature type="modified residue" description="Phosphoserine; by autocatalysis" evidence="2">
    <location>
        <position position="253"/>
    </location>
</feature>
<feature type="modified residue" description="Phosphoserine; by autocatalysis" evidence="2">
    <location>
        <position position="336"/>
    </location>
</feature>
<feature type="modified residue" description="Phosphoserine; by autocatalysis" evidence="2">
    <location>
        <position position="343"/>
    </location>
</feature>
<feature type="modified residue" description="Phosphoserine" evidence="13">
    <location>
        <position position="352"/>
    </location>
</feature>
<feature type="modified residue" description="Phosphoserine; by autocatalysis" evidence="2">
    <location>
        <position position="399"/>
    </location>
</feature>
<feature type="modified residue" description="Phosphoserine; by autocatalysis" evidence="2">
    <location>
        <position position="423"/>
    </location>
</feature>
<feature type="modified residue" description="Phosphothreonine; by autocatalysis" evidence="2">
    <location>
        <position position="486"/>
    </location>
</feature>
<feature type="modified residue" description="Phosphoserine" evidence="2">
    <location>
        <position position="490"/>
    </location>
</feature>
<feature type="modified residue" description="Phosphoserine; by autocatalysis" evidence="2">
    <location>
        <position position="497"/>
    </location>
</feature>
<feature type="modified residue" description="Phosphothreonine" evidence="2">
    <location>
        <position position="510"/>
    </location>
</feature>
<feature type="modified residue" description="Phosphoserine; by autocatalysis" evidence="11 12">
    <location>
        <position position="521"/>
    </location>
</feature>
<feature type="modified residue" description="Phosphothreonine; by autocatalysis" evidence="2">
    <location>
        <position position="531"/>
    </location>
</feature>
<feature type="mutagenesis site" description="Loss of kinase activity." evidence="7">
    <original>K</original>
    <variation>R</variation>
    <location>
        <position position="40"/>
    </location>
</feature>
<feature type="sequence conflict" description="In Ref. 2; CAA64641 and 4; BAC97886." evidence="10" ref="2 4">
    <original>L</original>
    <variation>P</variation>
    <location>
        <position position="335"/>
    </location>
</feature>
<feature type="helix" evidence="14">
    <location>
        <begin position="3"/>
        <end position="7"/>
    </location>
</feature>
<feature type="turn" evidence="14">
    <location>
        <begin position="8"/>
        <end position="10"/>
    </location>
</feature>
<feature type="strand" evidence="14">
    <location>
        <begin position="11"/>
        <end position="19"/>
    </location>
</feature>
<feature type="strand" evidence="14">
    <location>
        <begin position="21"/>
        <end position="30"/>
    </location>
</feature>
<feature type="turn" evidence="14">
    <location>
        <begin position="31"/>
        <end position="33"/>
    </location>
</feature>
<feature type="strand" evidence="14">
    <location>
        <begin position="36"/>
        <end position="43"/>
    </location>
</feature>
<feature type="helix" evidence="14">
    <location>
        <begin position="44"/>
        <end position="47"/>
    </location>
</feature>
<feature type="helix" evidence="14">
    <location>
        <begin position="48"/>
        <end position="51"/>
    </location>
</feature>
<feature type="helix" evidence="14">
    <location>
        <begin position="52"/>
        <end position="62"/>
    </location>
</feature>
<feature type="strand" evidence="14">
    <location>
        <begin position="72"/>
        <end position="77"/>
    </location>
</feature>
<feature type="strand" evidence="14">
    <location>
        <begin position="79"/>
        <end position="87"/>
    </location>
</feature>
<feature type="helix" evidence="14">
    <location>
        <begin position="94"/>
        <end position="101"/>
    </location>
</feature>
<feature type="helix" evidence="14">
    <location>
        <begin position="106"/>
        <end position="125"/>
    </location>
</feature>
<feature type="helix" evidence="14">
    <location>
        <begin position="135"/>
        <end position="137"/>
    </location>
</feature>
<feature type="strand" evidence="14">
    <location>
        <begin position="138"/>
        <end position="140"/>
    </location>
</feature>
<feature type="strand" evidence="14">
    <location>
        <begin position="146"/>
        <end position="148"/>
    </location>
</feature>
<feature type="helix" evidence="14">
    <location>
        <begin position="172"/>
        <end position="174"/>
    </location>
</feature>
<feature type="helix" evidence="14">
    <location>
        <begin position="177"/>
        <end position="179"/>
    </location>
</feature>
<feature type="helix" evidence="14">
    <location>
        <begin position="188"/>
        <end position="204"/>
    </location>
</feature>
<feature type="helix" evidence="14">
    <location>
        <begin position="214"/>
        <end position="223"/>
    </location>
</feature>
<feature type="helix" evidence="14">
    <location>
        <begin position="234"/>
        <end position="243"/>
    </location>
</feature>
<feature type="turn" evidence="14">
    <location>
        <begin position="248"/>
        <end position="250"/>
    </location>
</feature>
<feature type="helix" evidence="14">
    <location>
        <begin position="254"/>
        <end position="258"/>
    </location>
</feature>
<feature type="helix" evidence="14">
    <location>
        <begin position="261"/>
        <end position="264"/>
    </location>
</feature>
<feature type="helix" evidence="14">
    <location>
        <begin position="284"/>
        <end position="294"/>
    </location>
</feature>
<feature type="helix" evidence="14">
    <location>
        <begin position="298"/>
        <end position="305"/>
    </location>
</feature>
<feature type="helix" evidence="14">
    <location>
        <begin position="312"/>
        <end position="326"/>
    </location>
</feature>
<reference key="1">
    <citation type="journal article" date="1997" name="Gene">
        <title>Cloning and expression of a cDNA encoding a novel protein serine/threonine kinase predominantly expressed in hematopoietic cells.</title>
        <authorList>
            <person name="Gil M."/>
            <person name="Yang Y."/>
            <person name="Lee Y."/>
            <person name="Choi I."/>
            <person name="Ha H."/>
        </authorList>
    </citation>
    <scope>NUCLEOTIDE SEQUENCE [MRNA]</scope>
    <scope>TISSUE SPECIFICITY</scope>
    <source>
        <tissue>Keratinocyte</tissue>
    </source>
</reference>
<reference key="2">
    <citation type="journal article" date="1997" name="Mol. Reprod. Dev.">
        <title>New member of the Snf1/AMPK kinase family, Melk, is expressed in the mouse egg and preimplantation embryo.</title>
        <authorList>
            <person name="Heyer B.S."/>
            <person name="Warsowe J."/>
            <person name="Solter D."/>
            <person name="Knowles B.B."/>
            <person name="Ackerman S.L."/>
        </authorList>
    </citation>
    <scope>NUCLEOTIDE SEQUENCE [MRNA]</scope>
    <scope>TISSUE SPECIFICITY</scope>
    <scope>DEVELOPMENTAL STAGE</scope>
    <source>
        <strain>C57BL/6 X DBA/2</strain>
    </source>
</reference>
<reference key="3">
    <citation type="journal article" date="2005" name="Science">
        <title>The transcriptional landscape of the mammalian genome.</title>
        <authorList>
            <person name="Carninci P."/>
            <person name="Kasukawa T."/>
            <person name="Katayama S."/>
            <person name="Gough J."/>
            <person name="Frith M.C."/>
            <person name="Maeda N."/>
            <person name="Oyama R."/>
            <person name="Ravasi T."/>
            <person name="Lenhard B."/>
            <person name="Wells C."/>
            <person name="Kodzius R."/>
            <person name="Shimokawa K."/>
            <person name="Bajic V.B."/>
            <person name="Brenner S.E."/>
            <person name="Batalov S."/>
            <person name="Forrest A.R."/>
            <person name="Zavolan M."/>
            <person name="Davis M.J."/>
            <person name="Wilming L.G."/>
            <person name="Aidinis V."/>
            <person name="Allen J.E."/>
            <person name="Ambesi-Impiombato A."/>
            <person name="Apweiler R."/>
            <person name="Aturaliya R.N."/>
            <person name="Bailey T.L."/>
            <person name="Bansal M."/>
            <person name="Baxter L."/>
            <person name="Beisel K.W."/>
            <person name="Bersano T."/>
            <person name="Bono H."/>
            <person name="Chalk A.M."/>
            <person name="Chiu K.P."/>
            <person name="Choudhary V."/>
            <person name="Christoffels A."/>
            <person name="Clutterbuck D.R."/>
            <person name="Crowe M.L."/>
            <person name="Dalla E."/>
            <person name="Dalrymple B.P."/>
            <person name="de Bono B."/>
            <person name="Della Gatta G."/>
            <person name="di Bernardo D."/>
            <person name="Down T."/>
            <person name="Engstrom P."/>
            <person name="Fagiolini M."/>
            <person name="Faulkner G."/>
            <person name="Fletcher C.F."/>
            <person name="Fukushima T."/>
            <person name="Furuno M."/>
            <person name="Futaki S."/>
            <person name="Gariboldi M."/>
            <person name="Georgii-Hemming P."/>
            <person name="Gingeras T.R."/>
            <person name="Gojobori T."/>
            <person name="Green R.E."/>
            <person name="Gustincich S."/>
            <person name="Harbers M."/>
            <person name="Hayashi Y."/>
            <person name="Hensch T.K."/>
            <person name="Hirokawa N."/>
            <person name="Hill D."/>
            <person name="Huminiecki L."/>
            <person name="Iacono M."/>
            <person name="Ikeo K."/>
            <person name="Iwama A."/>
            <person name="Ishikawa T."/>
            <person name="Jakt M."/>
            <person name="Kanapin A."/>
            <person name="Katoh M."/>
            <person name="Kawasawa Y."/>
            <person name="Kelso J."/>
            <person name="Kitamura H."/>
            <person name="Kitano H."/>
            <person name="Kollias G."/>
            <person name="Krishnan S.P."/>
            <person name="Kruger A."/>
            <person name="Kummerfeld S.K."/>
            <person name="Kurochkin I.V."/>
            <person name="Lareau L.F."/>
            <person name="Lazarevic D."/>
            <person name="Lipovich L."/>
            <person name="Liu J."/>
            <person name="Liuni S."/>
            <person name="McWilliam S."/>
            <person name="Madan Babu M."/>
            <person name="Madera M."/>
            <person name="Marchionni L."/>
            <person name="Matsuda H."/>
            <person name="Matsuzawa S."/>
            <person name="Miki H."/>
            <person name="Mignone F."/>
            <person name="Miyake S."/>
            <person name="Morris K."/>
            <person name="Mottagui-Tabar S."/>
            <person name="Mulder N."/>
            <person name="Nakano N."/>
            <person name="Nakauchi H."/>
            <person name="Ng P."/>
            <person name="Nilsson R."/>
            <person name="Nishiguchi S."/>
            <person name="Nishikawa S."/>
            <person name="Nori F."/>
            <person name="Ohara O."/>
            <person name="Okazaki Y."/>
            <person name="Orlando V."/>
            <person name="Pang K.C."/>
            <person name="Pavan W.J."/>
            <person name="Pavesi G."/>
            <person name="Pesole G."/>
            <person name="Petrovsky N."/>
            <person name="Piazza S."/>
            <person name="Reed J."/>
            <person name="Reid J.F."/>
            <person name="Ring B.Z."/>
            <person name="Ringwald M."/>
            <person name="Rost B."/>
            <person name="Ruan Y."/>
            <person name="Salzberg S.L."/>
            <person name="Sandelin A."/>
            <person name="Schneider C."/>
            <person name="Schoenbach C."/>
            <person name="Sekiguchi K."/>
            <person name="Semple C.A."/>
            <person name="Seno S."/>
            <person name="Sessa L."/>
            <person name="Sheng Y."/>
            <person name="Shibata Y."/>
            <person name="Shimada H."/>
            <person name="Shimada K."/>
            <person name="Silva D."/>
            <person name="Sinclair B."/>
            <person name="Sperling S."/>
            <person name="Stupka E."/>
            <person name="Sugiura K."/>
            <person name="Sultana R."/>
            <person name="Takenaka Y."/>
            <person name="Taki K."/>
            <person name="Tammoja K."/>
            <person name="Tan S.L."/>
            <person name="Tang S."/>
            <person name="Taylor M.S."/>
            <person name="Tegner J."/>
            <person name="Teichmann S.A."/>
            <person name="Ueda H.R."/>
            <person name="van Nimwegen E."/>
            <person name="Verardo R."/>
            <person name="Wei C.L."/>
            <person name="Yagi K."/>
            <person name="Yamanishi H."/>
            <person name="Zabarovsky E."/>
            <person name="Zhu S."/>
            <person name="Zimmer A."/>
            <person name="Hide W."/>
            <person name="Bult C."/>
            <person name="Grimmond S.M."/>
            <person name="Teasdale R.D."/>
            <person name="Liu E.T."/>
            <person name="Brusic V."/>
            <person name="Quackenbush J."/>
            <person name="Wahlestedt C."/>
            <person name="Mattick J.S."/>
            <person name="Hume D.A."/>
            <person name="Kai C."/>
            <person name="Sasaki D."/>
            <person name="Tomaru Y."/>
            <person name="Fukuda S."/>
            <person name="Kanamori-Katayama M."/>
            <person name="Suzuki M."/>
            <person name="Aoki J."/>
            <person name="Arakawa T."/>
            <person name="Iida J."/>
            <person name="Imamura K."/>
            <person name="Itoh M."/>
            <person name="Kato T."/>
            <person name="Kawaji H."/>
            <person name="Kawagashira N."/>
            <person name="Kawashima T."/>
            <person name="Kojima M."/>
            <person name="Kondo S."/>
            <person name="Konno H."/>
            <person name="Nakano K."/>
            <person name="Ninomiya N."/>
            <person name="Nishio T."/>
            <person name="Okada M."/>
            <person name="Plessy C."/>
            <person name="Shibata K."/>
            <person name="Shiraki T."/>
            <person name="Suzuki S."/>
            <person name="Tagami M."/>
            <person name="Waki K."/>
            <person name="Watahiki A."/>
            <person name="Okamura-Oho Y."/>
            <person name="Suzuki H."/>
            <person name="Kawai J."/>
            <person name="Hayashizaki Y."/>
        </authorList>
    </citation>
    <scope>NUCLEOTIDE SEQUENCE [LARGE SCALE MRNA]</scope>
    <source>
        <strain>C57BL/6J</strain>
        <tissue>Embryo</tissue>
        <tissue>Spinal cord</tissue>
    </source>
</reference>
<reference key="4">
    <citation type="journal article" date="2003" name="DNA Res.">
        <title>Prediction of the coding sequences of mouse homologues of KIAA gene: III. The complete nucleotide sequences of 500 mouse KIAA-homologous cDNAs identified by screening of terminal sequences of cDNA clones randomly sampled from size-fractionated libraries.</title>
        <authorList>
            <person name="Okazaki N."/>
            <person name="Kikuno R."/>
            <person name="Ohara R."/>
            <person name="Inamoto S."/>
            <person name="Koseki H."/>
            <person name="Hiraoka S."/>
            <person name="Saga Y."/>
            <person name="Nagase T."/>
            <person name="Ohara O."/>
            <person name="Koga H."/>
        </authorList>
    </citation>
    <scope>NUCLEOTIDE SEQUENCE [LARGE SCALE MRNA]</scope>
    <source>
        <tissue>Embryonic tail</tissue>
    </source>
</reference>
<reference key="5">
    <citation type="journal article" date="2009" name="PLoS Biol.">
        <title>Lineage-specific biology revealed by a finished genome assembly of the mouse.</title>
        <authorList>
            <person name="Church D.M."/>
            <person name="Goodstadt L."/>
            <person name="Hillier L.W."/>
            <person name="Zody M.C."/>
            <person name="Goldstein S."/>
            <person name="She X."/>
            <person name="Bult C.J."/>
            <person name="Agarwala R."/>
            <person name="Cherry J.L."/>
            <person name="DiCuccio M."/>
            <person name="Hlavina W."/>
            <person name="Kapustin Y."/>
            <person name="Meric P."/>
            <person name="Maglott D."/>
            <person name="Birtle Z."/>
            <person name="Marques A.C."/>
            <person name="Graves T."/>
            <person name="Zhou S."/>
            <person name="Teague B."/>
            <person name="Potamousis K."/>
            <person name="Churas C."/>
            <person name="Place M."/>
            <person name="Herschleb J."/>
            <person name="Runnheim R."/>
            <person name="Forrest D."/>
            <person name="Amos-Landgraf J."/>
            <person name="Schwartz D.C."/>
            <person name="Cheng Z."/>
            <person name="Lindblad-Toh K."/>
            <person name="Eichler E.E."/>
            <person name="Ponting C.P."/>
        </authorList>
    </citation>
    <scope>NUCLEOTIDE SEQUENCE [LARGE SCALE GENOMIC DNA]</scope>
    <source>
        <strain>C57BL/6J</strain>
    </source>
</reference>
<reference key="6">
    <citation type="journal article" date="2005" name="J. Cell Biol.">
        <title>Maternal embryonic leucine zipper kinase (MELK) regulates multipotent neural progenitor proliferation.</title>
        <authorList>
            <person name="Nakano I."/>
            <person name="Paucar A.A."/>
            <person name="Bajpai R."/>
            <person name="Dougherty J.D."/>
            <person name="Zewail A."/>
            <person name="Kelly T.K."/>
            <person name="Kim K.J."/>
            <person name="Ou J."/>
            <person name="Groszer M."/>
            <person name="Imura T."/>
            <person name="Freije W.A."/>
            <person name="Nelson S.F."/>
            <person name="Sofroniew M.V."/>
            <person name="Wu H."/>
            <person name="Liu X."/>
            <person name="Terskikh A.V."/>
            <person name="Geschwind D.H."/>
            <person name="Kornblum H.I."/>
        </authorList>
    </citation>
    <scope>FUNCTION</scope>
    <scope>TISSUE SPECIFICITY</scope>
</reference>
<reference key="7">
    <citation type="journal article" date="2007" name="Proc. Natl. Acad. Sci. U.S.A.">
        <title>Large-scale phosphorylation analysis of mouse liver.</title>
        <authorList>
            <person name="Villen J."/>
            <person name="Beausoleil S.A."/>
            <person name="Gerber S.A."/>
            <person name="Gygi S.P."/>
        </authorList>
    </citation>
    <scope>PHOSPHORYLATION [LARGE SCALE ANALYSIS] AT SER-521</scope>
    <scope>IDENTIFICATION BY MASS SPECTROMETRY [LARGE SCALE ANALYSIS]</scope>
    <source>
        <tissue>Liver</tissue>
    </source>
</reference>
<reference key="8">
    <citation type="journal article" date="2008" name="J. Biol. Chem.">
        <title>Murine protein serine/threonine kinase 38 activates apoptosis signal-regulating kinase 1 via Thr 838 phosphorylation.</title>
        <authorList>
            <person name="Jung H."/>
            <person name="Seong H.A."/>
            <person name="Ha H."/>
        </authorList>
    </citation>
    <scope>FUNCTION IN PHOSPHORYLATION OF MAP3K5</scope>
    <scope>MUTAGENESIS OF LYS-40</scope>
</reference>
<reference key="9">
    <citation type="journal article" date="2009" name="Immunity">
        <title>The phagosomal proteome in interferon-gamma-activated macrophages.</title>
        <authorList>
            <person name="Trost M."/>
            <person name="English L."/>
            <person name="Lemieux S."/>
            <person name="Courcelles M."/>
            <person name="Desjardins M."/>
            <person name="Thibault P."/>
        </authorList>
    </citation>
    <scope>PHOSPHORYLATION [LARGE SCALE ANALYSIS] AT SER-521</scope>
    <scope>IDENTIFICATION BY MASS SPECTROMETRY [LARGE SCALE ANALYSIS]</scope>
</reference>
<reference key="10">
    <citation type="journal article" date="2010" name="Cell">
        <title>A tissue-specific atlas of mouse protein phosphorylation and expression.</title>
        <authorList>
            <person name="Huttlin E.L."/>
            <person name="Jedrychowski M.P."/>
            <person name="Elias J.E."/>
            <person name="Goswami T."/>
            <person name="Rad R."/>
            <person name="Beausoleil S.A."/>
            <person name="Villen J."/>
            <person name="Haas W."/>
            <person name="Sowa M.E."/>
            <person name="Gygi S.P."/>
        </authorList>
    </citation>
    <scope>PHOSPHORYLATION [LARGE SCALE ANALYSIS] AT SER-352</scope>
    <scope>IDENTIFICATION BY MASS SPECTROMETRY [LARGE SCALE ANALYSIS]</scope>
    <source>
        <tissue>Testis</tissue>
    </source>
</reference>
<proteinExistence type="evidence at protein level"/>
<name>MELK_MOUSE</name>